<comment type="function">
    <text evidence="1 2 6">Transcription factor that acts synergistically with SOX11 and SOX4. Plays a role in neuronal development (PubMed:31303265). Is implicated in an enhancer activity at the embryonic met-mesencephalic junction; the enhancer element contains the octamer motif (5'-ATTTGCAT-3') (By similarity).</text>
</comment>
<comment type="subunit">
    <text evidence="6">Homodimer.</text>
</comment>
<comment type="subcellular location">
    <subcellularLocation>
        <location evidence="6">Nucleus</location>
    </subcellularLocation>
</comment>
<comment type="tissue specificity">
    <text evidence="8">Brain.</text>
</comment>
<comment type="disease" evidence="6">
    <disease id="DI-05670">
        <name>Snijders Blok-Fisher syndrome</name>
        <acronym>SNIBFIS</acronym>
        <description>An autosomal dominant neurodevelopmental disorder characterized by global developmental delay, hypotonia, intellectual disability, autistic features, impairments in speech and language skills, and dysmorphic features including abnormal, cupped, or prominent ears and ocular anomalies.</description>
        <dbReference type="MIM" id="618604"/>
    </disease>
    <text>The disease is caused by variants affecting the gene represented in this entry.</text>
</comment>
<comment type="similarity">
    <text evidence="7">Belongs to the POU transcription factor family. Class-3 subfamily.</text>
</comment>
<name>PO3F3_HUMAN</name>
<reference key="1">
    <citation type="journal article" date="1996" name="J. Mol. Evol.">
        <title>Class III POU genes: generation of homopolymeric amino acid repeats under GC pressure in mammals.</title>
        <authorList>
            <person name="Sumiyama K."/>
            <person name="Washio-Watanabe K."/>
            <person name="Saitou N."/>
            <person name="Hayakawa T."/>
            <person name="Ueda S."/>
        </authorList>
    </citation>
    <scope>NUCLEOTIDE SEQUENCE [GENOMIC DNA]</scope>
</reference>
<reference key="2">
    <citation type="journal article" date="2005" name="Nature">
        <title>Generation and annotation of the DNA sequences of human chromosomes 2 and 4.</title>
        <authorList>
            <person name="Hillier L.W."/>
            <person name="Graves T.A."/>
            <person name="Fulton R.S."/>
            <person name="Fulton L.A."/>
            <person name="Pepin K.H."/>
            <person name="Minx P."/>
            <person name="Wagner-McPherson C."/>
            <person name="Layman D."/>
            <person name="Wylie K."/>
            <person name="Sekhon M."/>
            <person name="Becker M.C."/>
            <person name="Fewell G.A."/>
            <person name="Delehaunty K.D."/>
            <person name="Miner T.L."/>
            <person name="Nash W.E."/>
            <person name="Kremitzki C."/>
            <person name="Oddy L."/>
            <person name="Du H."/>
            <person name="Sun H."/>
            <person name="Bradshaw-Cordum H."/>
            <person name="Ali J."/>
            <person name="Carter J."/>
            <person name="Cordes M."/>
            <person name="Harris A."/>
            <person name="Isak A."/>
            <person name="van Brunt A."/>
            <person name="Nguyen C."/>
            <person name="Du F."/>
            <person name="Courtney L."/>
            <person name="Kalicki J."/>
            <person name="Ozersky P."/>
            <person name="Abbott S."/>
            <person name="Armstrong J."/>
            <person name="Belter E.A."/>
            <person name="Caruso L."/>
            <person name="Cedroni M."/>
            <person name="Cotton M."/>
            <person name="Davidson T."/>
            <person name="Desai A."/>
            <person name="Elliott G."/>
            <person name="Erb T."/>
            <person name="Fronick C."/>
            <person name="Gaige T."/>
            <person name="Haakenson W."/>
            <person name="Haglund K."/>
            <person name="Holmes A."/>
            <person name="Harkins R."/>
            <person name="Kim K."/>
            <person name="Kruchowski S.S."/>
            <person name="Strong C.M."/>
            <person name="Grewal N."/>
            <person name="Goyea E."/>
            <person name="Hou S."/>
            <person name="Levy A."/>
            <person name="Martinka S."/>
            <person name="Mead K."/>
            <person name="McLellan M.D."/>
            <person name="Meyer R."/>
            <person name="Randall-Maher J."/>
            <person name="Tomlinson C."/>
            <person name="Dauphin-Kohlberg S."/>
            <person name="Kozlowicz-Reilly A."/>
            <person name="Shah N."/>
            <person name="Swearengen-Shahid S."/>
            <person name="Snider J."/>
            <person name="Strong J.T."/>
            <person name="Thompson J."/>
            <person name="Yoakum M."/>
            <person name="Leonard S."/>
            <person name="Pearman C."/>
            <person name="Trani L."/>
            <person name="Radionenko M."/>
            <person name="Waligorski J.E."/>
            <person name="Wang C."/>
            <person name="Rock S.M."/>
            <person name="Tin-Wollam A.-M."/>
            <person name="Maupin R."/>
            <person name="Latreille P."/>
            <person name="Wendl M.C."/>
            <person name="Yang S.-P."/>
            <person name="Pohl C."/>
            <person name="Wallis J.W."/>
            <person name="Spieth J."/>
            <person name="Bieri T.A."/>
            <person name="Berkowicz N."/>
            <person name="Nelson J.O."/>
            <person name="Osborne J."/>
            <person name="Ding L."/>
            <person name="Meyer R."/>
            <person name="Sabo A."/>
            <person name="Shotland Y."/>
            <person name="Sinha P."/>
            <person name="Wohldmann P.E."/>
            <person name="Cook L.L."/>
            <person name="Hickenbotham M.T."/>
            <person name="Eldred J."/>
            <person name="Williams D."/>
            <person name="Jones T.A."/>
            <person name="She X."/>
            <person name="Ciccarelli F.D."/>
            <person name="Izaurralde E."/>
            <person name="Taylor J."/>
            <person name="Schmutz J."/>
            <person name="Myers R.M."/>
            <person name="Cox D.R."/>
            <person name="Huang X."/>
            <person name="McPherson J.D."/>
            <person name="Mardis E.R."/>
            <person name="Clifton S.W."/>
            <person name="Warren W.C."/>
            <person name="Chinwalla A.T."/>
            <person name="Eddy S.R."/>
            <person name="Marra M.A."/>
            <person name="Ovcharenko I."/>
            <person name="Furey T.S."/>
            <person name="Miller W."/>
            <person name="Eichler E.E."/>
            <person name="Bork P."/>
            <person name="Suyama M."/>
            <person name="Torrents D."/>
            <person name="Waterston R.H."/>
            <person name="Wilson R.K."/>
        </authorList>
    </citation>
    <scope>NUCLEOTIDE SEQUENCE [LARGE SCALE GENOMIC DNA]</scope>
</reference>
<reference key="3">
    <citation type="journal article" date="1989" name="Nature">
        <title>Expression of a large family of POU-domain regulatory genes in mammalian brain development.</title>
        <authorList>
            <person name="He X."/>
            <person name="Treacy M.N."/>
            <person name="Simmons D.M."/>
            <person name="Ingraham H.A."/>
            <person name="Swanson L.W."/>
            <person name="Rosenfeld M.G."/>
        </authorList>
    </citation>
    <scope>NUCLEOTIDE SEQUENCE [MRNA] OF 332-456</scope>
    <source>
        <tissue>Brain</tissue>
    </source>
</reference>
<reference key="4">
    <citation type="journal article" date="2019" name="Am. J. Hum. Genet.">
        <title>De Novo Variants Disturbing the Transactivation Capacity of POU3F3 Cause a Characteristic Neurodevelopmental Disorder.</title>
        <authorList>
            <consortium name="DDD Study"/>
            <person name="Snijders Blok L."/>
            <person name="Kleefstra T."/>
            <person name="Venselaar H."/>
            <person name="Maas S."/>
            <person name="Kroes H.Y."/>
            <person name="Lachmeijer A.M.A."/>
            <person name="van Gassen K.L.I."/>
            <person name="Firth H.V."/>
            <person name="Tomkins S."/>
            <person name="Bodek S."/>
            <person name="Ounap K."/>
            <person name="Wojcik M.H."/>
            <person name="Cunniff C."/>
            <person name="Bergstrom K."/>
            <person name="Powis Z."/>
            <person name="Tang S."/>
            <person name="Shinde D.N."/>
            <person name="Au C."/>
            <person name="Iglesias A.D."/>
            <person name="Izumi K."/>
            <person name="Leonard J."/>
            <person name="Abou Tayoun A."/>
            <person name="Baker S.W."/>
            <person name="Tartaglia M."/>
            <person name="Niceta M."/>
            <person name="Dentici M.L."/>
            <person name="Okamoto N."/>
            <person name="Miyake N."/>
            <person name="Matsumoto N."/>
            <person name="Vitobello A."/>
            <person name="Faivre L."/>
            <person name="Philippe C."/>
            <person name="Gilissen C."/>
            <person name="Wiel L."/>
            <person name="Pfundt R."/>
            <person name="Deriziotis P."/>
            <person name="Brunner H.G."/>
            <person name="Fisher S.E."/>
        </authorList>
    </citation>
    <scope>INVOLVEMENT IN SNIBFIS</scope>
    <scope>VARIANTS SNIBFIS 63-TYR--GLN-500 DEL; 223-SER--GLN-500 DEL; 331-GLN--LYS-335 DEL; LEU-362; GLY-407; LEU-407; 414-GLU--GLN-500 DEL; 428-CYS--GLN-500 DEL AND SER-456</scope>
    <scope>CHARACTERIZATION OF VARIANTS SNIBFIS 223-SER--GLN-500 DEL; 331-GLN--LYS-335 DEL; LEU-362; GLY-407; LEU-407; 428-CYS--GLN-500 DEL AND SER-456</scope>
    <scope>FUNCTION</scope>
    <scope>SUBCELLULAR LOCATION</scope>
    <scope>SUBUNIT</scope>
</reference>
<keyword id="KW-0217">Developmental protein</keyword>
<keyword id="KW-0225">Disease variant</keyword>
<keyword id="KW-0238">DNA-binding</keyword>
<keyword id="KW-0371">Homeobox</keyword>
<keyword id="KW-0991">Intellectual disability</keyword>
<keyword id="KW-0524">Neurogenesis</keyword>
<keyword id="KW-0539">Nucleus</keyword>
<keyword id="KW-1267">Proteomics identification</keyword>
<keyword id="KW-1185">Reference proteome</keyword>
<keyword id="KW-0804">Transcription</keyword>
<keyword id="KW-0805">Transcription regulation</keyword>
<evidence type="ECO:0000250" key="1">
    <source>
        <dbReference type="UniProtKB" id="P31361"/>
    </source>
</evidence>
<evidence type="ECO:0000250" key="2">
    <source>
        <dbReference type="UniProtKB" id="Q63262"/>
    </source>
</evidence>
<evidence type="ECO:0000255" key="3">
    <source>
        <dbReference type="PROSITE-ProRule" id="PRU00108"/>
    </source>
</evidence>
<evidence type="ECO:0000255" key="4">
    <source>
        <dbReference type="PROSITE-ProRule" id="PRU00530"/>
    </source>
</evidence>
<evidence type="ECO:0000256" key="5">
    <source>
        <dbReference type="SAM" id="MobiDB-lite"/>
    </source>
</evidence>
<evidence type="ECO:0000269" key="6">
    <source>
    </source>
</evidence>
<evidence type="ECO:0000305" key="7"/>
<evidence type="ECO:0000305" key="8">
    <source>
    </source>
</evidence>
<evidence type="ECO:0000312" key="9">
    <source>
        <dbReference type="HGNC" id="HGNC:9216"/>
    </source>
</evidence>
<proteinExistence type="evidence at protein level"/>
<accession>P20264</accession>
<accession>P78379</accession>
<accession>Q4ZG25</accession>
<organism>
    <name type="scientific">Homo sapiens</name>
    <name type="common">Human</name>
    <dbReference type="NCBI Taxonomy" id="9606"/>
    <lineage>
        <taxon>Eukaryota</taxon>
        <taxon>Metazoa</taxon>
        <taxon>Chordata</taxon>
        <taxon>Craniata</taxon>
        <taxon>Vertebrata</taxon>
        <taxon>Euteleostomi</taxon>
        <taxon>Mammalia</taxon>
        <taxon>Eutheria</taxon>
        <taxon>Euarchontoglires</taxon>
        <taxon>Primates</taxon>
        <taxon>Haplorrhini</taxon>
        <taxon>Catarrhini</taxon>
        <taxon>Hominidae</taxon>
        <taxon>Homo</taxon>
    </lineage>
</organism>
<sequence length="500" mass="50327">MATAASNPYLPGNSLLAAGSIVHSDAAGAGGGGGGGGGGGGGGAGGGGGGMQPGSAAVTSGAYRGDPSSVKMVQSDFMQGAMAASNGGHMLSHAHQWVTALPHAAAAAAAAAAAAVEASSPWSGSAVGMAGSPQQPPQPPPPPPQGPDVKGGAGRDDLHAGTALHHRGPPHLGPPPPPPHQGHPGGWGAAAAAAAAAAAAAAAAHLPSMAGGQQPPPQSLLYSQPGGFTVNGMLSAPPGPGGGGGGAGGGAQSLVHPGLVRGDTPELAEHHHHHHHHAHPHPPHPHHAQGPPHHGGGGGGAGPGLNSHDPHSDEDTPTSDDLEQFAKQFKQRRIKLGFTQADVGLALGTLYGNVFSQTTICRFEALQLSFKNMCKLKPLLNKWLEEADSSTGSPTSIDKIAAQGRKRKKRTSIEVSVKGALESHFLKCPKPSAQEITNLADSLQLEKEVVRVWFCNRRQKEKRMTPPGIQQQTPDDVYSQVGTVSADTPPPHHGLQTSVQ</sequence>
<dbReference type="EMBL" id="AB001835">
    <property type="protein sequence ID" value="BAA19459.1"/>
    <property type="molecule type" value="Genomic_DNA"/>
</dbReference>
<dbReference type="EMBL" id="AC018730">
    <property type="protein sequence ID" value="AAX88973.1"/>
    <property type="molecule type" value="Genomic_DNA"/>
</dbReference>
<dbReference type="CCDS" id="CCDS33265.1"/>
<dbReference type="RefSeq" id="NP_001420633.1">
    <property type="nucleotide sequence ID" value="NM_001433704.1"/>
</dbReference>
<dbReference type="RefSeq" id="NP_006227.1">
    <property type="nucleotide sequence ID" value="NM_006236.3"/>
</dbReference>
<dbReference type="SMR" id="P20264"/>
<dbReference type="BioGRID" id="111451">
    <property type="interactions" value="23"/>
</dbReference>
<dbReference type="FunCoup" id="P20264">
    <property type="interactions" value="1132"/>
</dbReference>
<dbReference type="IntAct" id="P20264">
    <property type="interactions" value="16"/>
</dbReference>
<dbReference type="MINT" id="P20264"/>
<dbReference type="STRING" id="9606.ENSP00000355001"/>
<dbReference type="BindingDB" id="P20264"/>
<dbReference type="ChEMBL" id="CHEMBL5243"/>
<dbReference type="iPTMnet" id="P20264"/>
<dbReference type="PhosphoSitePlus" id="P20264"/>
<dbReference type="BioMuta" id="POU3F3"/>
<dbReference type="DMDM" id="2506534"/>
<dbReference type="jPOST" id="P20264"/>
<dbReference type="MassIVE" id="P20264"/>
<dbReference type="PaxDb" id="9606-ENSP00000355001"/>
<dbReference type="PeptideAtlas" id="P20264"/>
<dbReference type="ProteomicsDB" id="53736"/>
<dbReference type="Pumba" id="P20264"/>
<dbReference type="Antibodypedia" id="32979">
    <property type="antibodies" value="156 antibodies from 32 providers"/>
</dbReference>
<dbReference type="DNASU" id="5455"/>
<dbReference type="Ensembl" id="ENST00000361360.4">
    <property type="protein sequence ID" value="ENSP00000355001.2"/>
    <property type="gene ID" value="ENSG00000198914.5"/>
</dbReference>
<dbReference type="Ensembl" id="ENST00000674056.1">
    <property type="protein sequence ID" value="ENSP00000501036.1"/>
    <property type="gene ID" value="ENSG00000198914.5"/>
</dbReference>
<dbReference type="GeneID" id="5455"/>
<dbReference type="KEGG" id="hsa:5455"/>
<dbReference type="MANE-Select" id="ENST00000361360.4">
    <property type="protein sequence ID" value="ENSP00000355001.2"/>
    <property type="RefSeq nucleotide sequence ID" value="NM_006236.3"/>
    <property type="RefSeq protein sequence ID" value="NP_006227.1"/>
</dbReference>
<dbReference type="UCSC" id="uc010ywg.3">
    <property type="organism name" value="human"/>
</dbReference>
<dbReference type="AGR" id="HGNC:9216"/>
<dbReference type="CTD" id="5455"/>
<dbReference type="DisGeNET" id="5455"/>
<dbReference type="GeneCards" id="POU3F3"/>
<dbReference type="HGNC" id="HGNC:9216">
    <property type="gene designation" value="POU3F3"/>
</dbReference>
<dbReference type="HPA" id="ENSG00000198914">
    <property type="expression patterns" value="Group enriched (brain, epididymis, kidney, seminal vesicle)"/>
</dbReference>
<dbReference type="MalaCards" id="POU3F3"/>
<dbReference type="MIM" id="602480">
    <property type="type" value="gene"/>
</dbReference>
<dbReference type="MIM" id="618604">
    <property type="type" value="phenotype"/>
</dbReference>
<dbReference type="neXtProt" id="NX_P20264"/>
<dbReference type="OpenTargets" id="ENSG00000198914"/>
<dbReference type="Orphanet" id="656135">
    <property type="disease" value="Intellectual disability-cupped ears syndrome"/>
</dbReference>
<dbReference type="PharmGKB" id="PA33540"/>
<dbReference type="VEuPathDB" id="HostDB:ENSG00000198914"/>
<dbReference type="eggNOG" id="KOG3802">
    <property type="taxonomic scope" value="Eukaryota"/>
</dbReference>
<dbReference type="GeneTree" id="ENSGT00940000163665"/>
<dbReference type="HOGENOM" id="CLU_013065_1_2_1"/>
<dbReference type="InParanoid" id="P20264"/>
<dbReference type="OMA" id="PPHQGHW"/>
<dbReference type="OrthoDB" id="6358449at2759"/>
<dbReference type="PAN-GO" id="P20264">
    <property type="GO annotations" value="3 GO annotations based on evolutionary models"/>
</dbReference>
<dbReference type="PhylomeDB" id="P20264"/>
<dbReference type="TreeFam" id="TF316413"/>
<dbReference type="PathwayCommons" id="P20264"/>
<dbReference type="Reactome" id="R-HSA-9831926">
    <property type="pathway name" value="Nephron development"/>
</dbReference>
<dbReference type="SignaLink" id="P20264"/>
<dbReference type="SIGNOR" id="P20264"/>
<dbReference type="BioGRID-ORCS" id="5455">
    <property type="hits" value="11 hits in 1090 CRISPR screens"/>
</dbReference>
<dbReference type="ChiTaRS" id="POU3F3">
    <property type="organism name" value="human"/>
</dbReference>
<dbReference type="GenomeRNAi" id="5455"/>
<dbReference type="Pharos" id="P20264">
    <property type="development level" value="Tbio"/>
</dbReference>
<dbReference type="PRO" id="PR:P20264"/>
<dbReference type="Proteomes" id="UP000005640">
    <property type="component" value="Chromosome 2"/>
</dbReference>
<dbReference type="RNAct" id="P20264">
    <property type="molecule type" value="protein"/>
</dbReference>
<dbReference type="Bgee" id="ENSG00000198914">
    <property type="expression patterns" value="Expressed in ventricular zone and 100 other cell types or tissues"/>
</dbReference>
<dbReference type="GO" id="GO:0000785">
    <property type="term" value="C:chromatin"/>
    <property type="evidence" value="ECO:0000247"/>
    <property type="project" value="NTNU_SB"/>
</dbReference>
<dbReference type="GO" id="GO:0005654">
    <property type="term" value="C:nucleoplasm"/>
    <property type="evidence" value="ECO:0000314"/>
    <property type="project" value="HPA"/>
</dbReference>
<dbReference type="GO" id="GO:0005634">
    <property type="term" value="C:nucleus"/>
    <property type="evidence" value="ECO:0000314"/>
    <property type="project" value="UniProtKB"/>
</dbReference>
<dbReference type="GO" id="GO:0003700">
    <property type="term" value="F:DNA-binding transcription factor activity"/>
    <property type="evidence" value="ECO:0000304"/>
    <property type="project" value="ProtInc"/>
</dbReference>
<dbReference type="GO" id="GO:0000981">
    <property type="term" value="F:DNA-binding transcription factor activity, RNA polymerase II-specific"/>
    <property type="evidence" value="ECO:0000247"/>
    <property type="project" value="NTNU_SB"/>
</dbReference>
<dbReference type="GO" id="GO:0071837">
    <property type="term" value="F:HMG box domain binding"/>
    <property type="evidence" value="ECO:0007669"/>
    <property type="project" value="Ensembl"/>
</dbReference>
<dbReference type="GO" id="GO:0042803">
    <property type="term" value="F:protein homodimerization activity"/>
    <property type="evidence" value="ECO:0000314"/>
    <property type="project" value="UniProtKB"/>
</dbReference>
<dbReference type="GO" id="GO:0000978">
    <property type="term" value="F:RNA polymerase II cis-regulatory region sequence-specific DNA binding"/>
    <property type="evidence" value="ECO:0000318"/>
    <property type="project" value="GO_Central"/>
</dbReference>
<dbReference type="GO" id="GO:0043565">
    <property type="term" value="F:sequence-specific DNA binding"/>
    <property type="evidence" value="ECO:0000250"/>
    <property type="project" value="UniProtKB"/>
</dbReference>
<dbReference type="GO" id="GO:0007417">
    <property type="term" value="P:central nervous system development"/>
    <property type="evidence" value="ECO:0000304"/>
    <property type="project" value="ProtInc"/>
</dbReference>
<dbReference type="GO" id="GO:0021799">
    <property type="term" value="P:cerebral cortex radially oriented cell migration"/>
    <property type="evidence" value="ECO:0007669"/>
    <property type="project" value="Ensembl"/>
</dbReference>
<dbReference type="GO" id="GO:0048878">
    <property type="term" value="P:chemical homeostasis"/>
    <property type="evidence" value="ECO:0007669"/>
    <property type="project" value="Ensembl"/>
</dbReference>
<dbReference type="GO" id="GO:0021869">
    <property type="term" value="P:forebrain ventricular zone progenitor cell division"/>
    <property type="evidence" value="ECO:0007669"/>
    <property type="project" value="Ensembl"/>
</dbReference>
<dbReference type="GO" id="GO:0072218">
    <property type="term" value="P:metanephric ascending thin limb development"/>
    <property type="evidence" value="ECO:0000250"/>
    <property type="project" value="UniProtKB"/>
</dbReference>
<dbReference type="GO" id="GO:0072240">
    <property type="term" value="P:metanephric DCT cell differentiation"/>
    <property type="evidence" value="ECO:0000250"/>
    <property type="project" value="UniProtKB"/>
</dbReference>
<dbReference type="GO" id="GO:0072236">
    <property type="term" value="P:metanephric loop of Henle development"/>
    <property type="evidence" value="ECO:0000250"/>
    <property type="project" value="UniProtKB"/>
</dbReference>
<dbReference type="GO" id="GO:0072227">
    <property type="term" value="P:metanephric macula densa development"/>
    <property type="evidence" value="ECO:0000250"/>
    <property type="project" value="UniProtKB"/>
</dbReference>
<dbReference type="GO" id="GO:0072233">
    <property type="term" value="P:metanephric thick ascending limb development"/>
    <property type="evidence" value="ECO:0000250"/>
    <property type="project" value="UniProtKB"/>
</dbReference>
<dbReference type="GO" id="GO:0043066">
    <property type="term" value="P:negative regulation of apoptotic process"/>
    <property type="evidence" value="ECO:0000250"/>
    <property type="project" value="UniProtKB"/>
</dbReference>
<dbReference type="GO" id="GO:0045892">
    <property type="term" value="P:negative regulation of DNA-templated transcription"/>
    <property type="evidence" value="ECO:0000250"/>
    <property type="project" value="UniProtKB"/>
</dbReference>
<dbReference type="GO" id="GO:0008284">
    <property type="term" value="P:positive regulation of cell population proliferation"/>
    <property type="evidence" value="ECO:0000250"/>
    <property type="project" value="UniProtKB"/>
</dbReference>
<dbReference type="GO" id="GO:0045893">
    <property type="term" value="P:positive regulation of DNA-templated transcription"/>
    <property type="evidence" value="ECO:0000314"/>
    <property type="project" value="UniProtKB"/>
</dbReference>
<dbReference type="GO" id="GO:0010628">
    <property type="term" value="P:positive regulation of gene expression"/>
    <property type="evidence" value="ECO:0000250"/>
    <property type="project" value="UniProtKB"/>
</dbReference>
<dbReference type="GO" id="GO:0045944">
    <property type="term" value="P:positive regulation of transcription by RNA polymerase II"/>
    <property type="evidence" value="ECO:0007669"/>
    <property type="project" value="Ensembl"/>
</dbReference>
<dbReference type="GO" id="GO:0006357">
    <property type="term" value="P:regulation of transcription by RNA polymerase II"/>
    <property type="evidence" value="ECO:0000318"/>
    <property type="project" value="GO_Central"/>
</dbReference>
<dbReference type="GO" id="GO:0071918">
    <property type="term" value="P:urea transmembrane transport"/>
    <property type="evidence" value="ECO:0007669"/>
    <property type="project" value="Ensembl"/>
</dbReference>
<dbReference type="CDD" id="cd00086">
    <property type="entry name" value="homeodomain"/>
    <property type="match status" value="1"/>
</dbReference>
<dbReference type="FunFam" id="1.10.10.60:FF:000005">
    <property type="entry name" value="POU domain protein"/>
    <property type="match status" value="1"/>
</dbReference>
<dbReference type="FunFam" id="1.10.260.40:FF:000001">
    <property type="entry name" value="POU domain protein"/>
    <property type="match status" value="1"/>
</dbReference>
<dbReference type="Gene3D" id="1.10.10.60">
    <property type="entry name" value="Homeodomain-like"/>
    <property type="match status" value="1"/>
</dbReference>
<dbReference type="Gene3D" id="1.10.260.40">
    <property type="entry name" value="lambda repressor-like DNA-binding domains"/>
    <property type="match status" value="1"/>
</dbReference>
<dbReference type="InterPro" id="IPR001356">
    <property type="entry name" value="HD"/>
</dbReference>
<dbReference type="InterPro" id="IPR017970">
    <property type="entry name" value="Homeobox_CS"/>
</dbReference>
<dbReference type="InterPro" id="IPR009057">
    <property type="entry name" value="Homeodomain-like_sf"/>
</dbReference>
<dbReference type="InterPro" id="IPR010982">
    <property type="entry name" value="Lambda_DNA-bd_dom_sf"/>
</dbReference>
<dbReference type="InterPro" id="IPR013847">
    <property type="entry name" value="POU"/>
</dbReference>
<dbReference type="InterPro" id="IPR000327">
    <property type="entry name" value="POU_dom"/>
</dbReference>
<dbReference type="InterPro" id="IPR050255">
    <property type="entry name" value="POU_domain_TF"/>
</dbReference>
<dbReference type="InterPro" id="IPR016362">
    <property type="entry name" value="TF_POU_3"/>
</dbReference>
<dbReference type="PANTHER" id="PTHR11636">
    <property type="entry name" value="POU DOMAIN"/>
    <property type="match status" value="1"/>
</dbReference>
<dbReference type="PANTHER" id="PTHR11636:SF125">
    <property type="entry name" value="POU DOMAIN, CLASS 3, TRANSCRIPTION FACTOR 3"/>
    <property type="match status" value="1"/>
</dbReference>
<dbReference type="Pfam" id="PF00046">
    <property type="entry name" value="Homeodomain"/>
    <property type="match status" value="1"/>
</dbReference>
<dbReference type="Pfam" id="PF00157">
    <property type="entry name" value="Pou"/>
    <property type="match status" value="1"/>
</dbReference>
<dbReference type="PIRSF" id="PIRSF002629">
    <property type="entry name" value="Transcription_factor_POU"/>
    <property type="match status" value="1"/>
</dbReference>
<dbReference type="PRINTS" id="PR00028">
    <property type="entry name" value="POUDOMAIN"/>
</dbReference>
<dbReference type="SMART" id="SM00389">
    <property type="entry name" value="HOX"/>
    <property type="match status" value="1"/>
</dbReference>
<dbReference type="SMART" id="SM00352">
    <property type="entry name" value="POU"/>
    <property type="match status" value="1"/>
</dbReference>
<dbReference type="SUPFAM" id="SSF46689">
    <property type="entry name" value="Homeodomain-like"/>
    <property type="match status" value="1"/>
</dbReference>
<dbReference type="SUPFAM" id="SSF47413">
    <property type="entry name" value="lambda repressor-like DNA-binding domains"/>
    <property type="match status" value="1"/>
</dbReference>
<dbReference type="PROSITE" id="PS00027">
    <property type="entry name" value="HOMEOBOX_1"/>
    <property type="match status" value="1"/>
</dbReference>
<dbReference type="PROSITE" id="PS50071">
    <property type="entry name" value="HOMEOBOX_2"/>
    <property type="match status" value="1"/>
</dbReference>
<dbReference type="PROSITE" id="PS00035">
    <property type="entry name" value="POU_1"/>
    <property type="match status" value="1"/>
</dbReference>
<dbReference type="PROSITE" id="PS00465">
    <property type="entry name" value="POU_2"/>
    <property type="match status" value="1"/>
</dbReference>
<dbReference type="PROSITE" id="PS51179">
    <property type="entry name" value="POU_3"/>
    <property type="match status" value="1"/>
</dbReference>
<gene>
    <name evidence="9" type="primary">POU3F3</name>
    <name type="synonym">BRN1</name>
    <name type="synonym">OTF8</name>
</gene>
<feature type="chain" id="PRO_0000100727" description="POU domain, class 3, transcription factor 3">
    <location>
        <begin position="1"/>
        <end position="500"/>
    </location>
</feature>
<feature type="domain" description="POU-specific" evidence="4">
    <location>
        <begin position="314"/>
        <end position="388"/>
    </location>
</feature>
<feature type="DNA-binding region" description="Homeobox" evidence="3">
    <location>
        <begin position="406"/>
        <end position="465"/>
    </location>
</feature>
<feature type="region of interest" description="Disordered" evidence="5">
    <location>
        <begin position="32"/>
        <end position="63"/>
    </location>
</feature>
<feature type="region of interest" description="Disordered" evidence="5">
    <location>
        <begin position="122"/>
        <end position="190"/>
    </location>
</feature>
<feature type="region of interest" description="Disordered" evidence="5">
    <location>
        <begin position="231"/>
        <end position="319"/>
    </location>
</feature>
<feature type="region of interest" description="Disordered" evidence="5">
    <location>
        <begin position="461"/>
        <end position="500"/>
    </location>
</feature>
<feature type="compositionally biased region" description="Gly residues" evidence="5">
    <location>
        <begin position="32"/>
        <end position="52"/>
    </location>
</feature>
<feature type="compositionally biased region" description="Pro residues" evidence="5">
    <location>
        <begin position="134"/>
        <end position="146"/>
    </location>
</feature>
<feature type="compositionally biased region" description="Pro residues" evidence="5">
    <location>
        <begin position="171"/>
        <end position="181"/>
    </location>
</feature>
<feature type="compositionally biased region" description="Gly residues" evidence="5">
    <location>
        <begin position="241"/>
        <end position="251"/>
    </location>
</feature>
<feature type="compositionally biased region" description="Basic residues" evidence="5">
    <location>
        <begin position="270"/>
        <end position="287"/>
    </location>
</feature>
<feature type="compositionally biased region" description="Gly residues" evidence="5">
    <location>
        <begin position="293"/>
        <end position="303"/>
    </location>
</feature>
<feature type="compositionally biased region" description="Polar residues" evidence="5">
    <location>
        <begin position="468"/>
        <end position="486"/>
    </location>
</feature>
<feature type="sequence variant" id="VAR_083083" description="In SNIBFIS." evidence="6">
    <location>
        <begin position="63"/>
        <end position="500"/>
    </location>
</feature>
<feature type="sequence variant" id="VAR_083084" description="In SNIBFIS; mislocation in cytoplasm in addition to nuclear location; decreased transcriptional activation function; abolished homodimerization." evidence="6">
    <location>
        <begin position="223"/>
        <end position="500"/>
    </location>
</feature>
<feature type="sequence variant" id="VAR_083085" description="In SNIBFIS; mislocation within the nucleus; decreased transcriptional activation function; decreased homodimerization." evidence="6">
    <location>
        <begin position="331"/>
        <end position="335"/>
    </location>
</feature>
<feature type="sequence variant" id="VAR_083086" description="In SNIBFIS; no effect on nuclear location; decreased transcriptional activation function; no effect on homodimerization." evidence="6">
    <original>R</original>
    <variation>L</variation>
    <location>
        <position position="362"/>
    </location>
</feature>
<feature type="sequence variant" id="VAR_083087" description="In SNIBFIS; no effect on nuclear location; no effect on transcriptional activation function; no effect on homodimerization." evidence="6">
    <original>R</original>
    <variation>G</variation>
    <location>
        <position position="407"/>
    </location>
</feature>
<feature type="sequence variant" id="VAR_083088" description="In SNIBFIS; no effect on nuclear location; increased transcriptional activation function; no effect on homodimerization." evidence="6">
    <original>R</original>
    <variation>L</variation>
    <location>
        <position position="407"/>
    </location>
</feature>
<feature type="sequence variant" id="VAR_083089" description="In SNIBFIS." evidence="6">
    <location>
        <begin position="414"/>
        <end position="500"/>
    </location>
</feature>
<feature type="sequence variant" id="VAR_083090" description="In SNIBFIS; mislocation within the nucleus; decreased transcriptional activation function; decreased homodimerization." evidence="6">
    <location>
        <begin position="428"/>
        <end position="500"/>
    </location>
</feature>
<feature type="sequence variant" id="VAR_083091" description="In SNIBFIS; no effect on nuclear location; decreased transcriptional activation function; slightly decreased homodimerization." evidence="6">
    <original>N</original>
    <variation>S</variation>
    <location>
        <position position="456"/>
    </location>
</feature>
<feature type="sequence conflict" description="In Ref. 3." evidence="7" ref="3">
    <original>A</original>
    <variation>S</variation>
    <location>
        <position position="433"/>
    </location>
</feature>
<protein>
    <recommendedName>
        <fullName evidence="7">POU domain, class 3, transcription factor 3</fullName>
    </recommendedName>
    <alternativeName>
        <fullName>Brain-specific homeobox/POU domain protein 1</fullName>
        <shortName>Brain-1</shortName>
        <shortName>Brn-1</shortName>
    </alternativeName>
    <alternativeName>
        <fullName>Octamer-binding protein 8</fullName>
        <shortName>Oct-8</shortName>
    </alternativeName>
    <alternativeName>
        <fullName>Octamer-binding transcription factor 8</fullName>
        <shortName>OTF-8</shortName>
    </alternativeName>
</protein>